<dbReference type="EC" id="3.6.-.-" evidence="1"/>
<dbReference type="EMBL" id="CP001189">
    <property type="protein sequence ID" value="ACI51700.1"/>
    <property type="molecule type" value="Genomic_DNA"/>
</dbReference>
<dbReference type="EMBL" id="AM889285">
    <property type="protein sequence ID" value="CAP55172.1"/>
    <property type="molecule type" value="Genomic_DNA"/>
</dbReference>
<dbReference type="RefSeq" id="WP_012224371.1">
    <property type="nucleotide sequence ID" value="NC_010125.1"/>
</dbReference>
<dbReference type="SMR" id="A9HE16"/>
<dbReference type="STRING" id="272568.GDI1229"/>
<dbReference type="KEGG" id="gdi:GDI1229"/>
<dbReference type="KEGG" id="gdj:Gdia_1940"/>
<dbReference type="eggNOG" id="COG0486">
    <property type="taxonomic scope" value="Bacteria"/>
</dbReference>
<dbReference type="HOGENOM" id="CLU_019624_3_1_5"/>
<dbReference type="OrthoDB" id="9805918at2"/>
<dbReference type="Proteomes" id="UP000001176">
    <property type="component" value="Chromosome"/>
</dbReference>
<dbReference type="GO" id="GO:0005737">
    <property type="term" value="C:cytoplasm"/>
    <property type="evidence" value="ECO:0007669"/>
    <property type="project" value="UniProtKB-SubCell"/>
</dbReference>
<dbReference type="GO" id="GO:0005525">
    <property type="term" value="F:GTP binding"/>
    <property type="evidence" value="ECO:0007669"/>
    <property type="project" value="UniProtKB-UniRule"/>
</dbReference>
<dbReference type="GO" id="GO:0003924">
    <property type="term" value="F:GTPase activity"/>
    <property type="evidence" value="ECO:0007669"/>
    <property type="project" value="UniProtKB-UniRule"/>
</dbReference>
<dbReference type="GO" id="GO:0046872">
    <property type="term" value="F:metal ion binding"/>
    <property type="evidence" value="ECO:0007669"/>
    <property type="project" value="UniProtKB-KW"/>
</dbReference>
<dbReference type="GO" id="GO:0030488">
    <property type="term" value="P:tRNA methylation"/>
    <property type="evidence" value="ECO:0007669"/>
    <property type="project" value="TreeGrafter"/>
</dbReference>
<dbReference type="GO" id="GO:0002098">
    <property type="term" value="P:tRNA wobble uridine modification"/>
    <property type="evidence" value="ECO:0007669"/>
    <property type="project" value="TreeGrafter"/>
</dbReference>
<dbReference type="CDD" id="cd04164">
    <property type="entry name" value="trmE"/>
    <property type="match status" value="1"/>
</dbReference>
<dbReference type="CDD" id="cd14858">
    <property type="entry name" value="TrmE_N"/>
    <property type="match status" value="1"/>
</dbReference>
<dbReference type="FunFam" id="3.30.1360.120:FF:000007">
    <property type="entry name" value="tRNA modification GTPase GTPBP3, mitochondrial"/>
    <property type="match status" value="1"/>
</dbReference>
<dbReference type="Gene3D" id="3.40.50.300">
    <property type="entry name" value="P-loop containing nucleotide triphosphate hydrolases"/>
    <property type="match status" value="1"/>
</dbReference>
<dbReference type="Gene3D" id="3.30.1360.120">
    <property type="entry name" value="Probable tRNA modification gtpase trme, domain 1"/>
    <property type="match status" value="1"/>
</dbReference>
<dbReference type="Gene3D" id="1.20.120.430">
    <property type="entry name" value="tRNA modification GTPase MnmE domain 2"/>
    <property type="match status" value="1"/>
</dbReference>
<dbReference type="HAMAP" id="MF_00379">
    <property type="entry name" value="GTPase_MnmE"/>
    <property type="match status" value="1"/>
</dbReference>
<dbReference type="InterPro" id="IPR031168">
    <property type="entry name" value="G_TrmE"/>
</dbReference>
<dbReference type="InterPro" id="IPR006073">
    <property type="entry name" value="GTP-bd"/>
</dbReference>
<dbReference type="InterPro" id="IPR018948">
    <property type="entry name" value="GTP-bd_TrmE_N"/>
</dbReference>
<dbReference type="InterPro" id="IPR004520">
    <property type="entry name" value="GTPase_MnmE"/>
</dbReference>
<dbReference type="InterPro" id="IPR027368">
    <property type="entry name" value="MnmE_dom2"/>
</dbReference>
<dbReference type="InterPro" id="IPR025867">
    <property type="entry name" value="MnmE_helical"/>
</dbReference>
<dbReference type="InterPro" id="IPR027417">
    <property type="entry name" value="P-loop_NTPase"/>
</dbReference>
<dbReference type="InterPro" id="IPR005225">
    <property type="entry name" value="Small_GTP-bd"/>
</dbReference>
<dbReference type="InterPro" id="IPR027266">
    <property type="entry name" value="TrmE/GcvT_dom1"/>
</dbReference>
<dbReference type="NCBIfam" id="NF003661">
    <property type="entry name" value="PRK05291.1-3"/>
    <property type="match status" value="1"/>
</dbReference>
<dbReference type="NCBIfam" id="TIGR00231">
    <property type="entry name" value="small_GTP"/>
    <property type="match status" value="1"/>
</dbReference>
<dbReference type="PANTHER" id="PTHR42714">
    <property type="entry name" value="TRNA MODIFICATION GTPASE GTPBP3"/>
    <property type="match status" value="1"/>
</dbReference>
<dbReference type="PANTHER" id="PTHR42714:SF2">
    <property type="entry name" value="TRNA MODIFICATION GTPASE GTPBP3, MITOCHONDRIAL"/>
    <property type="match status" value="1"/>
</dbReference>
<dbReference type="Pfam" id="PF01926">
    <property type="entry name" value="MMR_HSR1"/>
    <property type="match status" value="1"/>
</dbReference>
<dbReference type="Pfam" id="PF12631">
    <property type="entry name" value="MnmE_helical"/>
    <property type="match status" value="1"/>
</dbReference>
<dbReference type="Pfam" id="PF10396">
    <property type="entry name" value="TrmE_N"/>
    <property type="match status" value="1"/>
</dbReference>
<dbReference type="PRINTS" id="PR00326">
    <property type="entry name" value="GTP1OBG"/>
</dbReference>
<dbReference type="SUPFAM" id="SSF52540">
    <property type="entry name" value="P-loop containing nucleoside triphosphate hydrolases"/>
    <property type="match status" value="1"/>
</dbReference>
<dbReference type="SUPFAM" id="SSF116878">
    <property type="entry name" value="TrmE connector domain"/>
    <property type="match status" value="1"/>
</dbReference>
<dbReference type="PROSITE" id="PS51709">
    <property type="entry name" value="G_TRME"/>
    <property type="match status" value="1"/>
</dbReference>
<feature type="chain" id="PRO_1000122112" description="tRNA modification GTPase MnmE">
    <location>
        <begin position="1"/>
        <end position="435"/>
    </location>
</feature>
<feature type="domain" description="TrmE-type G">
    <location>
        <begin position="220"/>
        <end position="361"/>
    </location>
</feature>
<feature type="binding site" evidence="1">
    <location>
        <position position="24"/>
    </location>
    <ligand>
        <name>(6S)-5-formyl-5,6,7,8-tetrahydrofolate</name>
        <dbReference type="ChEBI" id="CHEBI:57457"/>
    </ligand>
</feature>
<feature type="binding site" evidence="1">
    <location>
        <position position="85"/>
    </location>
    <ligand>
        <name>(6S)-5-formyl-5,6,7,8-tetrahydrofolate</name>
        <dbReference type="ChEBI" id="CHEBI:57457"/>
    </ligand>
</feature>
<feature type="binding site" evidence="1">
    <location>
        <position position="124"/>
    </location>
    <ligand>
        <name>(6S)-5-formyl-5,6,7,8-tetrahydrofolate</name>
        <dbReference type="ChEBI" id="CHEBI:57457"/>
    </ligand>
</feature>
<feature type="binding site" evidence="1">
    <location>
        <begin position="230"/>
        <end position="235"/>
    </location>
    <ligand>
        <name>GTP</name>
        <dbReference type="ChEBI" id="CHEBI:37565"/>
    </ligand>
</feature>
<feature type="binding site" evidence="1">
    <location>
        <position position="230"/>
    </location>
    <ligand>
        <name>K(+)</name>
        <dbReference type="ChEBI" id="CHEBI:29103"/>
    </ligand>
</feature>
<feature type="binding site" evidence="1">
    <location>
        <position position="234"/>
    </location>
    <ligand>
        <name>Mg(2+)</name>
        <dbReference type="ChEBI" id="CHEBI:18420"/>
    </ligand>
</feature>
<feature type="binding site" evidence="1">
    <location>
        <begin position="249"/>
        <end position="255"/>
    </location>
    <ligand>
        <name>GTP</name>
        <dbReference type="ChEBI" id="CHEBI:37565"/>
    </ligand>
</feature>
<feature type="binding site" evidence="1">
    <location>
        <position position="249"/>
    </location>
    <ligand>
        <name>K(+)</name>
        <dbReference type="ChEBI" id="CHEBI:29103"/>
    </ligand>
</feature>
<feature type="binding site" evidence="1">
    <location>
        <position position="251"/>
    </location>
    <ligand>
        <name>K(+)</name>
        <dbReference type="ChEBI" id="CHEBI:29103"/>
    </ligand>
</feature>
<feature type="binding site" evidence="1">
    <location>
        <position position="254"/>
    </location>
    <ligand>
        <name>K(+)</name>
        <dbReference type="ChEBI" id="CHEBI:29103"/>
    </ligand>
</feature>
<feature type="binding site" evidence="1">
    <location>
        <position position="255"/>
    </location>
    <ligand>
        <name>Mg(2+)</name>
        <dbReference type="ChEBI" id="CHEBI:18420"/>
    </ligand>
</feature>
<feature type="binding site" evidence="1">
    <location>
        <begin position="274"/>
        <end position="277"/>
    </location>
    <ligand>
        <name>GTP</name>
        <dbReference type="ChEBI" id="CHEBI:37565"/>
    </ligand>
</feature>
<feature type="binding site" evidence="1">
    <location>
        <position position="435"/>
    </location>
    <ligand>
        <name>(6S)-5-formyl-5,6,7,8-tetrahydrofolate</name>
        <dbReference type="ChEBI" id="CHEBI:57457"/>
    </ligand>
</feature>
<sequence length="435" mass="46133">MPTEQMPIFALATGAGRAAIAVMRLTGAGCGDMLQRLCGPLPPPRQASLRGLWRRDAAAAPVLLDRALVLWFPGPRSYTGEDSAELHLHAGPAVIAGVADALVALGARPAEPGEFTRRAFAHGRLDLIEAEGIADLIDAETEAQRRQALDQADGTLSRIYDGWAARLRTLLAHQEALIDFPDEDLPPGVEQALLDDLTALRSEMQAHLDDGGRGEKLRRGLVFTIVGAPNVGKSSLLNALAGRDAAIVSAIAGTTRDAIEIRVVLGDVPVTLIDTAGLRETQDEIEAEGVRRALFHVKHADCVIAMFDGETVPDDIPADAIRVRNKVDLAPVPAGADAIGISVRQGTGMDALRTALAERARALTASAAGPPLTRARHRAAIEETAGHLAAALDMHWPEMRGEEMRLAMRALGRLTGAVGVEDLLDTVFGQFCIGK</sequence>
<reference key="1">
    <citation type="journal article" date="2009" name="BMC Genomics">
        <title>Complete genome sequence of the sugarcane nitrogen-fixing endophyte Gluconacetobacter diazotrophicus Pal5.</title>
        <authorList>
            <person name="Bertalan M."/>
            <person name="Albano R."/>
            <person name="de Padua V."/>
            <person name="Rouws L."/>
            <person name="Rojas C."/>
            <person name="Hemerly A."/>
            <person name="Teixeira K."/>
            <person name="Schwab S."/>
            <person name="Araujo J."/>
            <person name="Oliveira A."/>
            <person name="Franca L."/>
            <person name="Magalhaes V."/>
            <person name="Alqueres S."/>
            <person name="Cardoso A."/>
            <person name="Almeida W."/>
            <person name="Loureiro M.M."/>
            <person name="Nogueira E."/>
            <person name="Cidade D."/>
            <person name="Oliveira D."/>
            <person name="Simao T."/>
            <person name="Macedo J."/>
            <person name="Valadao A."/>
            <person name="Dreschsel M."/>
            <person name="Freitas F."/>
            <person name="Vidal M."/>
            <person name="Guedes H."/>
            <person name="Rodrigues E."/>
            <person name="Meneses C."/>
            <person name="Brioso P."/>
            <person name="Pozzer L."/>
            <person name="Figueiredo D."/>
            <person name="Montano H."/>
            <person name="Junior J."/>
            <person name="de Souza Filho G."/>
            <person name="Martin Quintana Flores V."/>
            <person name="Ferreira B."/>
            <person name="Branco A."/>
            <person name="Gonzalez P."/>
            <person name="Guillobel H."/>
            <person name="Lemos M."/>
            <person name="Seibel L."/>
            <person name="Macedo J."/>
            <person name="Alves-Ferreira M."/>
            <person name="Sachetto-Martins G."/>
            <person name="Coelho A."/>
            <person name="Santos E."/>
            <person name="Amaral G."/>
            <person name="Neves A."/>
            <person name="Pacheco A.B."/>
            <person name="Carvalho D."/>
            <person name="Lery L."/>
            <person name="Bisch P."/>
            <person name="Rossle S.C."/>
            <person name="Urmenyi T."/>
            <person name="Rael Pereira A."/>
            <person name="Silva R."/>
            <person name="Rondinelli E."/>
            <person name="von Kruger W."/>
            <person name="Martins O."/>
            <person name="Baldani J.I."/>
            <person name="Ferreira P.C."/>
        </authorList>
    </citation>
    <scope>NUCLEOTIDE SEQUENCE [LARGE SCALE GENOMIC DNA]</scope>
    <source>
        <strain>ATCC 49037 / DSM 5601 / CCUG 37298 / CIP 103539 / LMG 7603 / PAl5</strain>
    </source>
</reference>
<reference key="2">
    <citation type="journal article" date="2010" name="Stand. Genomic Sci.">
        <title>Two genome sequences of the same bacterial strain, Gluconacetobacter diazotrophicus PAl 5, suggest a new standard in genome sequence submission.</title>
        <authorList>
            <person name="Giongo A."/>
            <person name="Tyler H.L."/>
            <person name="Zipperer U.N."/>
            <person name="Triplett E.W."/>
        </authorList>
    </citation>
    <scope>NUCLEOTIDE SEQUENCE [LARGE SCALE GENOMIC DNA]</scope>
    <source>
        <strain>ATCC 49037 / DSM 5601 / CCUG 37298 / CIP 103539 / LMG 7603 / PAl5</strain>
    </source>
</reference>
<accession>A9HE16</accession>
<proteinExistence type="inferred from homology"/>
<evidence type="ECO:0000255" key="1">
    <source>
        <dbReference type="HAMAP-Rule" id="MF_00379"/>
    </source>
</evidence>
<keyword id="KW-0963">Cytoplasm</keyword>
<keyword id="KW-0342">GTP-binding</keyword>
<keyword id="KW-0378">Hydrolase</keyword>
<keyword id="KW-0460">Magnesium</keyword>
<keyword id="KW-0479">Metal-binding</keyword>
<keyword id="KW-0547">Nucleotide-binding</keyword>
<keyword id="KW-0630">Potassium</keyword>
<keyword id="KW-1185">Reference proteome</keyword>
<keyword id="KW-0819">tRNA processing</keyword>
<gene>
    <name evidence="1" type="primary">mnmE</name>
    <name evidence="1" type="synonym">trmE</name>
    <name type="ordered locus">GDI1229</name>
    <name type="ordered locus">Gdia_1940</name>
</gene>
<organism>
    <name type="scientific">Gluconacetobacter diazotrophicus (strain ATCC 49037 / DSM 5601 / CCUG 37298 / CIP 103539 / LMG 7603 / PAl5)</name>
    <dbReference type="NCBI Taxonomy" id="272568"/>
    <lineage>
        <taxon>Bacteria</taxon>
        <taxon>Pseudomonadati</taxon>
        <taxon>Pseudomonadota</taxon>
        <taxon>Alphaproteobacteria</taxon>
        <taxon>Acetobacterales</taxon>
        <taxon>Acetobacteraceae</taxon>
        <taxon>Gluconacetobacter</taxon>
    </lineage>
</organism>
<name>MNME_GLUDA</name>
<protein>
    <recommendedName>
        <fullName evidence="1">tRNA modification GTPase MnmE</fullName>
        <ecNumber evidence="1">3.6.-.-</ecNumber>
    </recommendedName>
</protein>
<comment type="function">
    <text evidence="1">Exhibits a very high intrinsic GTPase hydrolysis rate. Involved in the addition of a carboxymethylaminomethyl (cmnm) group at the wobble position (U34) of certain tRNAs, forming tRNA-cmnm(5)s(2)U34.</text>
</comment>
<comment type="cofactor">
    <cofactor evidence="1">
        <name>K(+)</name>
        <dbReference type="ChEBI" id="CHEBI:29103"/>
    </cofactor>
    <text evidence="1">Binds 1 potassium ion per subunit.</text>
</comment>
<comment type="subunit">
    <text evidence="1">Homodimer. Heterotetramer of two MnmE and two MnmG subunits.</text>
</comment>
<comment type="subcellular location">
    <subcellularLocation>
        <location evidence="1">Cytoplasm</location>
    </subcellularLocation>
</comment>
<comment type="similarity">
    <text evidence="1">Belongs to the TRAFAC class TrmE-Era-EngA-EngB-Septin-like GTPase superfamily. TrmE GTPase family.</text>
</comment>